<feature type="chain" id="PRO_0000042561" description="Multidrug efflux pump accessory protein AcrZ">
    <location>
        <begin position="1"/>
        <end position="49"/>
    </location>
</feature>
<feature type="topological domain" description="Periplasmic" evidence="1">
    <location>
        <begin position="1"/>
        <end position="7"/>
    </location>
</feature>
<feature type="transmembrane region" description="Helical" evidence="2">
    <location>
        <begin position="8"/>
        <end position="28"/>
    </location>
</feature>
<feature type="topological domain" description="Cytoplasmic" evidence="1">
    <location>
        <begin position="29"/>
        <end position="49"/>
    </location>
</feature>
<sequence length="49" mass="5300">MLELLKSLVFAVIMVPVVMAIILGLIYGLGEVFNIFSGVGKKDQPGQNH</sequence>
<organism>
    <name type="scientific">Escherichia coli O157:H7</name>
    <dbReference type="NCBI Taxonomy" id="83334"/>
    <lineage>
        <taxon>Bacteria</taxon>
        <taxon>Pseudomonadati</taxon>
        <taxon>Pseudomonadota</taxon>
        <taxon>Gammaproteobacteria</taxon>
        <taxon>Enterobacterales</taxon>
        <taxon>Enterobacteriaceae</taxon>
        <taxon>Escherichia</taxon>
    </lineage>
</organism>
<evidence type="ECO:0000250" key="1"/>
<evidence type="ECO:0000255" key="2">
    <source>
        <dbReference type="HAMAP-Rule" id="MF_01484"/>
    </source>
</evidence>
<comment type="function">
    <text evidence="2">AcrA-AcrB-AcrZ-TolC is a drug efflux protein complex with a broad substrate specificity. This protein binds to AcrB and is required for efflux of some but not all substrates, suggesting it may influence the specificity of drug export.</text>
</comment>
<comment type="subunit">
    <text evidence="2">Part of the AcrA-AcrB-AcrZ-TolC efflux pump, interacts directly with AcrB.</text>
</comment>
<comment type="subcellular location">
    <subcellularLocation>
        <location evidence="2">Cell inner membrane</location>
        <topology evidence="2">Single-pass membrane protein</topology>
    </subcellularLocation>
</comment>
<comment type="similarity">
    <text evidence="2">Belongs to the AcrZ family.</text>
</comment>
<reference key="1">
    <citation type="journal article" date="2001" name="Nature">
        <title>Genome sequence of enterohaemorrhagic Escherichia coli O157:H7.</title>
        <authorList>
            <person name="Perna N.T."/>
            <person name="Plunkett G. III"/>
            <person name="Burland V."/>
            <person name="Mau B."/>
            <person name="Glasner J.D."/>
            <person name="Rose D.J."/>
            <person name="Mayhew G.F."/>
            <person name="Evans P.S."/>
            <person name="Gregor J."/>
            <person name="Kirkpatrick H.A."/>
            <person name="Posfai G."/>
            <person name="Hackett J."/>
            <person name="Klink S."/>
            <person name="Boutin A."/>
            <person name="Shao Y."/>
            <person name="Miller L."/>
            <person name="Grotbeck E.J."/>
            <person name="Davis N.W."/>
            <person name="Lim A."/>
            <person name="Dimalanta E.T."/>
            <person name="Potamousis K."/>
            <person name="Apodaca J."/>
            <person name="Anantharaman T.S."/>
            <person name="Lin J."/>
            <person name="Yen G."/>
            <person name="Schwartz D.C."/>
            <person name="Welch R.A."/>
            <person name="Blattner F.R."/>
        </authorList>
    </citation>
    <scope>NUCLEOTIDE SEQUENCE [LARGE SCALE GENOMIC DNA]</scope>
    <source>
        <strain>O157:H7 / EDL933 / ATCC 700927 / EHEC</strain>
    </source>
</reference>
<reference key="2">
    <citation type="journal article" date="2001" name="DNA Res.">
        <title>Complete genome sequence of enterohemorrhagic Escherichia coli O157:H7 and genomic comparison with a laboratory strain K-12.</title>
        <authorList>
            <person name="Hayashi T."/>
            <person name="Makino K."/>
            <person name="Ohnishi M."/>
            <person name="Kurokawa K."/>
            <person name="Ishii K."/>
            <person name="Yokoyama K."/>
            <person name="Han C.-G."/>
            <person name="Ohtsubo E."/>
            <person name="Nakayama K."/>
            <person name="Murata T."/>
            <person name="Tanaka M."/>
            <person name="Tobe T."/>
            <person name="Iida T."/>
            <person name="Takami H."/>
            <person name="Honda T."/>
            <person name="Sasakawa C."/>
            <person name="Ogasawara N."/>
            <person name="Yasunaga T."/>
            <person name="Kuhara S."/>
            <person name="Shiba T."/>
            <person name="Hattori M."/>
            <person name="Shinagawa H."/>
        </authorList>
    </citation>
    <scope>NUCLEOTIDE SEQUENCE [LARGE SCALE GENOMIC DNA]</scope>
    <source>
        <strain>O157:H7 / Sakai / RIMD 0509952 / EHEC</strain>
    </source>
</reference>
<name>ACRZ_ECO57</name>
<accession>P0AAX1</accession>
<accession>P75759</accession>
<keyword id="KW-0046">Antibiotic resistance</keyword>
<keyword id="KW-0997">Cell inner membrane</keyword>
<keyword id="KW-1003">Cell membrane</keyword>
<keyword id="KW-0472">Membrane</keyword>
<keyword id="KW-1185">Reference proteome</keyword>
<keyword id="KW-0812">Transmembrane</keyword>
<keyword id="KW-1133">Transmembrane helix</keyword>
<keyword id="KW-0813">Transport</keyword>
<proteinExistence type="inferred from homology"/>
<dbReference type="EMBL" id="AE005174">
    <property type="protein sequence ID" value="AAG55091.1"/>
    <property type="molecule type" value="Genomic_DNA"/>
</dbReference>
<dbReference type="EMBL" id="BA000007">
    <property type="protein sequence ID" value="BAB34213.1"/>
    <property type="molecule type" value="Genomic_DNA"/>
</dbReference>
<dbReference type="PIR" id="F90727">
    <property type="entry name" value="F90727"/>
</dbReference>
<dbReference type="PIR" id="G85578">
    <property type="entry name" value="G85578"/>
</dbReference>
<dbReference type="RefSeq" id="NP_308817.1">
    <property type="nucleotide sequence ID" value="NC_002695.1"/>
</dbReference>
<dbReference type="RefSeq" id="WP_000891515.1">
    <property type="nucleotide sequence ID" value="NZ_VOAI01000019.1"/>
</dbReference>
<dbReference type="SMR" id="P0AAX1"/>
<dbReference type="STRING" id="155864.Z0932"/>
<dbReference type="GeneID" id="917527"/>
<dbReference type="GeneID" id="93776719"/>
<dbReference type="KEGG" id="ece:Z0932"/>
<dbReference type="KEGG" id="ecs:ECs_0790"/>
<dbReference type="PATRIC" id="fig|386585.9.peg.910"/>
<dbReference type="eggNOG" id="ENOG5033AHW">
    <property type="taxonomic scope" value="Bacteria"/>
</dbReference>
<dbReference type="HOGENOM" id="CLU_196028_0_1_6"/>
<dbReference type="Proteomes" id="UP000000558">
    <property type="component" value="Chromosome"/>
</dbReference>
<dbReference type="Proteomes" id="UP000002519">
    <property type="component" value="Chromosome"/>
</dbReference>
<dbReference type="GO" id="GO:0005886">
    <property type="term" value="C:plasma membrane"/>
    <property type="evidence" value="ECO:0007669"/>
    <property type="project" value="UniProtKB-SubCell"/>
</dbReference>
<dbReference type="GO" id="GO:0042910">
    <property type="term" value="F:xenobiotic transmembrane transporter activity"/>
    <property type="evidence" value="ECO:0007669"/>
    <property type="project" value="UniProtKB-UniRule"/>
</dbReference>
<dbReference type="GO" id="GO:0046677">
    <property type="term" value="P:response to antibiotic"/>
    <property type="evidence" value="ECO:0007669"/>
    <property type="project" value="UniProtKB-KW"/>
</dbReference>
<dbReference type="GO" id="GO:1990961">
    <property type="term" value="P:xenobiotic detoxification by transmembrane export across the plasma membrane"/>
    <property type="evidence" value="ECO:0007669"/>
    <property type="project" value="InterPro"/>
</dbReference>
<dbReference type="Gene3D" id="6.10.250.2480">
    <property type="match status" value="1"/>
</dbReference>
<dbReference type="HAMAP" id="MF_01484">
    <property type="entry name" value="AcrZ"/>
    <property type="match status" value="1"/>
</dbReference>
<dbReference type="InterPro" id="IPR019702">
    <property type="entry name" value="AcrZ"/>
</dbReference>
<dbReference type="InterPro" id="IPR053730">
    <property type="entry name" value="MEP_Accessory_AcrZ"/>
</dbReference>
<dbReference type="Pfam" id="PF10766">
    <property type="entry name" value="AcrZ"/>
    <property type="match status" value="1"/>
</dbReference>
<protein>
    <recommendedName>
        <fullName evidence="2">Multidrug efflux pump accessory protein AcrZ</fullName>
    </recommendedName>
    <alternativeName>
        <fullName evidence="2">AcrAB-TolC multidrug efflux pump accessory protein AcrZ</fullName>
    </alternativeName>
    <alternativeName>
        <fullName evidence="2">Acridine resistance protein Z</fullName>
    </alternativeName>
</protein>
<gene>
    <name evidence="2" type="primary">acrZ</name>
    <name type="ordered locus">Z0932</name>
    <name type="ordered locus">ECs0790</name>
</gene>